<accession>B5Z8U1</accession>
<proteinExistence type="inferred from homology"/>
<name>RL17_HELPG</name>
<protein>
    <recommendedName>
        <fullName evidence="1">Large ribosomal subunit protein bL17</fullName>
    </recommendedName>
    <alternativeName>
        <fullName evidence="2">50S ribosomal protein L17</fullName>
    </alternativeName>
</protein>
<dbReference type="EMBL" id="CP001173">
    <property type="protein sequence ID" value="ACI27990.1"/>
    <property type="molecule type" value="Genomic_DNA"/>
</dbReference>
<dbReference type="RefSeq" id="WP_001216123.1">
    <property type="nucleotide sequence ID" value="NC_011333.1"/>
</dbReference>
<dbReference type="SMR" id="B5Z8U1"/>
<dbReference type="KEGG" id="hpg:HPG27_1242"/>
<dbReference type="HOGENOM" id="CLU_074407_2_0_7"/>
<dbReference type="Proteomes" id="UP000001735">
    <property type="component" value="Chromosome"/>
</dbReference>
<dbReference type="GO" id="GO:0022625">
    <property type="term" value="C:cytosolic large ribosomal subunit"/>
    <property type="evidence" value="ECO:0007669"/>
    <property type="project" value="TreeGrafter"/>
</dbReference>
<dbReference type="GO" id="GO:0003735">
    <property type="term" value="F:structural constituent of ribosome"/>
    <property type="evidence" value="ECO:0007669"/>
    <property type="project" value="InterPro"/>
</dbReference>
<dbReference type="GO" id="GO:0006412">
    <property type="term" value="P:translation"/>
    <property type="evidence" value="ECO:0007669"/>
    <property type="project" value="UniProtKB-UniRule"/>
</dbReference>
<dbReference type="FunFam" id="3.90.1030.10:FF:000003">
    <property type="entry name" value="50S ribosomal protein L17"/>
    <property type="match status" value="1"/>
</dbReference>
<dbReference type="Gene3D" id="3.90.1030.10">
    <property type="entry name" value="Ribosomal protein L17"/>
    <property type="match status" value="1"/>
</dbReference>
<dbReference type="HAMAP" id="MF_01368">
    <property type="entry name" value="Ribosomal_bL17"/>
    <property type="match status" value="1"/>
</dbReference>
<dbReference type="InterPro" id="IPR000456">
    <property type="entry name" value="Ribosomal_bL17"/>
</dbReference>
<dbReference type="InterPro" id="IPR047859">
    <property type="entry name" value="Ribosomal_bL17_CS"/>
</dbReference>
<dbReference type="InterPro" id="IPR036373">
    <property type="entry name" value="Ribosomal_bL17_sf"/>
</dbReference>
<dbReference type="NCBIfam" id="TIGR00059">
    <property type="entry name" value="L17"/>
    <property type="match status" value="1"/>
</dbReference>
<dbReference type="PANTHER" id="PTHR14413:SF16">
    <property type="entry name" value="LARGE RIBOSOMAL SUBUNIT PROTEIN BL17M"/>
    <property type="match status" value="1"/>
</dbReference>
<dbReference type="PANTHER" id="PTHR14413">
    <property type="entry name" value="RIBOSOMAL PROTEIN L17"/>
    <property type="match status" value="1"/>
</dbReference>
<dbReference type="Pfam" id="PF01196">
    <property type="entry name" value="Ribosomal_L17"/>
    <property type="match status" value="1"/>
</dbReference>
<dbReference type="SUPFAM" id="SSF64263">
    <property type="entry name" value="Prokaryotic ribosomal protein L17"/>
    <property type="match status" value="1"/>
</dbReference>
<dbReference type="PROSITE" id="PS01167">
    <property type="entry name" value="RIBOSOMAL_L17"/>
    <property type="match status" value="1"/>
</dbReference>
<sequence length="116" mass="13394">MRHKHGYRKLGRTSSHRKALLKNLAIALIEHNKIETGIYKAKELRSYIEKLTTTARVGDFNAHRHVFAYLQNKEATHKLVTEIAPKYAQRNGGYTRIQRTTFRRGDASTLATIEFV</sequence>
<evidence type="ECO:0000255" key="1">
    <source>
        <dbReference type="HAMAP-Rule" id="MF_01368"/>
    </source>
</evidence>
<evidence type="ECO:0000305" key="2"/>
<keyword id="KW-1185">Reference proteome</keyword>
<keyword id="KW-0687">Ribonucleoprotein</keyword>
<keyword id="KW-0689">Ribosomal protein</keyword>
<feature type="chain" id="PRO_1000144434" description="Large ribosomal subunit protein bL17">
    <location>
        <begin position="1"/>
        <end position="116"/>
    </location>
</feature>
<comment type="subunit">
    <text evidence="1">Part of the 50S ribosomal subunit. Contacts protein L32.</text>
</comment>
<comment type="similarity">
    <text evidence="1">Belongs to the bacterial ribosomal protein bL17 family.</text>
</comment>
<organism>
    <name type="scientific">Helicobacter pylori (strain G27)</name>
    <dbReference type="NCBI Taxonomy" id="563041"/>
    <lineage>
        <taxon>Bacteria</taxon>
        <taxon>Pseudomonadati</taxon>
        <taxon>Campylobacterota</taxon>
        <taxon>Epsilonproteobacteria</taxon>
        <taxon>Campylobacterales</taxon>
        <taxon>Helicobacteraceae</taxon>
        <taxon>Helicobacter</taxon>
    </lineage>
</organism>
<gene>
    <name evidence="1" type="primary">rplQ</name>
    <name type="ordered locus">HPG27_1242</name>
</gene>
<reference key="1">
    <citation type="journal article" date="2009" name="J. Bacteriol.">
        <title>The complete genome sequence of Helicobacter pylori strain G27.</title>
        <authorList>
            <person name="Baltrus D.A."/>
            <person name="Amieva M.R."/>
            <person name="Covacci A."/>
            <person name="Lowe T.M."/>
            <person name="Merrell D.S."/>
            <person name="Ottemann K.M."/>
            <person name="Stein M."/>
            <person name="Salama N.R."/>
            <person name="Guillemin K."/>
        </authorList>
    </citation>
    <scope>NUCLEOTIDE SEQUENCE [LARGE SCALE GENOMIC DNA]</scope>
    <source>
        <strain>G27</strain>
    </source>
</reference>